<feature type="initiator methionine" description="Removed" evidence="1">
    <location>
        <position position="1"/>
    </location>
</feature>
<feature type="chain" id="PRO_1000117387" description="Formamidopyrimidine-DNA glycosylase">
    <location>
        <begin position="2"/>
        <end position="271"/>
    </location>
</feature>
<feature type="zinc finger region" description="FPG-type" evidence="2">
    <location>
        <begin position="236"/>
        <end position="270"/>
    </location>
</feature>
<feature type="active site" description="Schiff-base intermediate with DNA" evidence="2">
    <location>
        <position position="2"/>
    </location>
</feature>
<feature type="active site" description="Proton donor" evidence="2">
    <location>
        <position position="3"/>
    </location>
</feature>
<feature type="active site" description="Proton donor; for beta-elimination activity" evidence="2">
    <location>
        <position position="57"/>
    </location>
</feature>
<feature type="active site" description="Proton donor; for delta-elimination activity" evidence="2">
    <location>
        <position position="260"/>
    </location>
</feature>
<feature type="binding site" evidence="2">
    <location>
        <position position="90"/>
    </location>
    <ligand>
        <name>DNA</name>
        <dbReference type="ChEBI" id="CHEBI:16991"/>
    </ligand>
</feature>
<feature type="binding site" evidence="2">
    <location>
        <position position="109"/>
    </location>
    <ligand>
        <name>DNA</name>
        <dbReference type="ChEBI" id="CHEBI:16991"/>
    </ligand>
</feature>
<feature type="binding site" evidence="2">
    <location>
        <position position="151"/>
    </location>
    <ligand>
        <name>DNA</name>
        <dbReference type="ChEBI" id="CHEBI:16991"/>
    </ligand>
</feature>
<gene>
    <name evidence="2" type="primary">mutM</name>
    <name evidence="2" type="synonym">fpg</name>
    <name type="ordered locus">swp_4992</name>
</gene>
<proteinExistence type="inferred from homology"/>
<sequence length="271" mass="29869">MPELPEVEVTKQGVSPYLIDNRVTDLIIRNPSLRWPVPDIAKQIIGQTIRAVRRRAKYLLIDTDAGTTIVHLGMSGSLRILPINSPVEKHDHIDLVLASGKILRYNDPRRFGAWLWNELPEQAHPLLAKLGPEPLESAFNSSYLLSALANKKKAIKLCLMDNHIVVGVGNIYANEALFAAGIHPQAEAGKVDAERISILVAEVKQILARAIKQGGTTLKDFTNAEGKPGYFAQKLHVYGRGGDTCTHCGQLLSEIRLGQRATVFCSICQQR</sequence>
<organism>
    <name type="scientific">Shewanella piezotolerans (strain WP3 / JCM 13877)</name>
    <dbReference type="NCBI Taxonomy" id="225849"/>
    <lineage>
        <taxon>Bacteria</taxon>
        <taxon>Pseudomonadati</taxon>
        <taxon>Pseudomonadota</taxon>
        <taxon>Gammaproteobacteria</taxon>
        <taxon>Alteromonadales</taxon>
        <taxon>Shewanellaceae</taxon>
        <taxon>Shewanella</taxon>
    </lineage>
</organism>
<name>FPG_SHEPW</name>
<keyword id="KW-0227">DNA damage</keyword>
<keyword id="KW-0234">DNA repair</keyword>
<keyword id="KW-0238">DNA-binding</keyword>
<keyword id="KW-0326">Glycosidase</keyword>
<keyword id="KW-0378">Hydrolase</keyword>
<keyword id="KW-0456">Lyase</keyword>
<keyword id="KW-0479">Metal-binding</keyword>
<keyword id="KW-0511">Multifunctional enzyme</keyword>
<keyword id="KW-0862">Zinc</keyword>
<keyword id="KW-0863">Zinc-finger</keyword>
<dbReference type="EC" id="3.2.2.23" evidence="2"/>
<dbReference type="EC" id="4.2.99.18" evidence="2"/>
<dbReference type="EMBL" id="CP000472">
    <property type="protein sequence ID" value="ACJ31607.1"/>
    <property type="molecule type" value="Genomic_DNA"/>
</dbReference>
<dbReference type="RefSeq" id="WP_020914936.1">
    <property type="nucleotide sequence ID" value="NC_011566.1"/>
</dbReference>
<dbReference type="SMR" id="B8CVD1"/>
<dbReference type="STRING" id="225849.swp_4992"/>
<dbReference type="KEGG" id="swp:swp_4992"/>
<dbReference type="eggNOG" id="COG0266">
    <property type="taxonomic scope" value="Bacteria"/>
</dbReference>
<dbReference type="HOGENOM" id="CLU_038423_1_1_6"/>
<dbReference type="OrthoDB" id="9800855at2"/>
<dbReference type="Proteomes" id="UP000000753">
    <property type="component" value="Chromosome"/>
</dbReference>
<dbReference type="GO" id="GO:0034039">
    <property type="term" value="F:8-oxo-7,8-dihydroguanine DNA N-glycosylase activity"/>
    <property type="evidence" value="ECO:0007669"/>
    <property type="project" value="TreeGrafter"/>
</dbReference>
<dbReference type="GO" id="GO:0140078">
    <property type="term" value="F:class I DNA-(apurinic or apyrimidinic site) endonuclease activity"/>
    <property type="evidence" value="ECO:0007669"/>
    <property type="project" value="UniProtKB-EC"/>
</dbReference>
<dbReference type="GO" id="GO:0003684">
    <property type="term" value="F:damaged DNA binding"/>
    <property type="evidence" value="ECO:0007669"/>
    <property type="project" value="InterPro"/>
</dbReference>
<dbReference type="GO" id="GO:0008270">
    <property type="term" value="F:zinc ion binding"/>
    <property type="evidence" value="ECO:0007669"/>
    <property type="project" value="UniProtKB-UniRule"/>
</dbReference>
<dbReference type="GO" id="GO:0006284">
    <property type="term" value="P:base-excision repair"/>
    <property type="evidence" value="ECO:0007669"/>
    <property type="project" value="InterPro"/>
</dbReference>
<dbReference type="CDD" id="cd08966">
    <property type="entry name" value="EcFpg-like_N"/>
    <property type="match status" value="1"/>
</dbReference>
<dbReference type="FunFam" id="1.10.8.50:FF:000003">
    <property type="entry name" value="Formamidopyrimidine-DNA glycosylase"/>
    <property type="match status" value="1"/>
</dbReference>
<dbReference type="FunFam" id="3.20.190.10:FF:000001">
    <property type="entry name" value="Formamidopyrimidine-DNA glycosylase"/>
    <property type="match status" value="1"/>
</dbReference>
<dbReference type="Gene3D" id="1.10.8.50">
    <property type="match status" value="1"/>
</dbReference>
<dbReference type="Gene3D" id="3.20.190.10">
    <property type="entry name" value="MutM-like, N-terminal"/>
    <property type="match status" value="1"/>
</dbReference>
<dbReference type="HAMAP" id="MF_00103">
    <property type="entry name" value="Fapy_DNA_glycosyl"/>
    <property type="match status" value="1"/>
</dbReference>
<dbReference type="InterPro" id="IPR015886">
    <property type="entry name" value="DNA_glyclase/AP_lyase_DNA-bd"/>
</dbReference>
<dbReference type="InterPro" id="IPR015887">
    <property type="entry name" value="DNA_glyclase_Znf_dom_DNA_BS"/>
</dbReference>
<dbReference type="InterPro" id="IPR020629">
    <property type="entry name" value="Formamido-pyr_DNA_Glyclase"/>
</dbReference>
<dbReference type="InterPro" id="IPR012319">
    <property type="entry name" value="FPG_cat"/>
</dbReference>
<dbReference type="InterPro" id="IPR035937">
    <property type="entry name" value="MutM-like_N-ter"/>
</dbReference>
<dbReference type="InterPro" id="IPR010979">
    <property type="entry name" value="Ribosomal_uS13-like_H2TH"/>
</dbReference>
<dbReference type="InterPro" id="IPR000214">
    <property type="entry name" value="Znf_DNA_glyclase/AP_lyase"/>
</dbReference>
<dbReference type="InterPro" id="IPR010663">
    <property type="entry name" value="Znf_FPG/IleRS"/>
</dbReference>
<dbReference type="NCBIfam" id="TIGR00577">
    <property type="entry name" value="fpg"/>
    <property type="match status" value="1"/>
</dbReference>
<dbReference type="NCBIfam" id="NF002211">
    <property type="entry name" value="PRK01103.1"/>
    <property type="match status" value="1"/>
</dbReference>
<dbReference type="PANTHER" id="PTHR22993">
    <property type="entry name" value="FORMAMIDOPYRIMIDINE-DNA GLYCOSYLASE"/>
    <property type="match status" value="1"/>
</dbReference>
<dbReference type="PANTHER" id="PTHR22993:SF9">
    <property type="entry name" value="FORMAMIDOPYRIMIDINE-DNA GLYCOSYLASE"/>
    <property type="match status" value="1"/>
</dbReference>
<dbReference type="Pfam" id="PF01149">
    <property type="entry name" value="Fapy_DNA_glyco"/>
    <property type="match status" value="1"/>
</dbReference>
<dbReference type="Pfam" id="PF06831">
    <property type="entry name" value="H2TH"/>
    <property type="match status" value="1"/>
</dbReference>
<dbReference type="Pfam" id="PF06827">
    <property type="entry name" value="zf-FPG_IleRS"/>
    <property type="match status" value="1"/>
</dbReference>
<dbReference type="SMART" id="SM00898">
    <property type="entry name" value="Fapy_DNA_glyco"/>
    <property type="match status" value="1"/>
</dbReference>
<dbReference type="SMART" id="SM01232">
    <property type="entry name" value="H2TH"/>
    <property type="match status" value="1"/>
</dbReference>
<dbReference type="SUPFAM" id="SSF57716">
    <property type="entry name" value="Glucocorticoid receptor-like (DNA-binding domain)"/>
    <property type="match status" value="1"/>
</dbReference>
<dbReference type="SUPFAM" id="SSF81624">
    <property type="entry name" value="N-terminal domain of MutM-like DNA repair proteins"/>
    <property type="match status" value="1"/>
</dbReference>
<dbReference type="SUPFAM" id="SSF46946">
    <property type="entry name" value="S13-like H2TH domain"/>
    <property type="match status" value="1"/>
</dbReference>
<dbReference type="PROSITE" id="PS51068">
    <property type="entry name" value="FPG_CAT"/>
    <property type="match status" value="1"/>
</dbReference>
<dbReference type="PROSITE" id="PS01242">
    <property type="entry name" value="ZF_FPG_1"/>
    <property type="match status" value="1"/>
</dbReference>
<dbReference type="PROSITE" id="PS51066">
    <property type="entry name" value="ZF_FPG_2"/>
    <property type="match status" value="1"/>
</dbReference>
<evidence type="ECO:0000250" key="1"/>
<evidence type="ECO:0000255" key="2">
    <source>
        <dbReference type="HAMAP-Rule" id="MF_00103"/>
    </source>
</evidence>
<comment type="function">
    <text evidence="2">Involved in base excision repair of DNA damaged by oxidation or by mutagenic agents. Acts as a DNA glycosylase that recognizes and removes damaged bases. Has a preference for oxidized purines, such as 7,8-dihydro-8-oxoguanine (8-oxoG). Has AP (apurinic/apyrimidinic) lyase activity and introduces nicks in the DNA strand. Cleaves the DNA backbone by beta-delta elimination to generate a single-strand break at the site of the removed base with both 3'- and 5'-phosphates.</text>
</comment>
<comment type="catalytic activity">
    <reaction evidence="2">
        <text>Hydrolysis of DNA containing ring-opened 7-methylguanine residues, releasing 2,6-diamino-4-hydroxy-5-(N-methyl)formamidopyrimidine.</text>
        <dbReference type="EC" id="3.2.2.23"/>
    </reaction>
</comment>
<comment type="catalytic activity">
    <reaction evidence="2">
        <text>2'-deoxyribonucleotide-(2'-deoxyribose 5'-phosphate)-2'-deoxyribonucleotide-DNA = a 3'-end 2'-deoxyribonucleotide-(2,3-dehydro-2,3-deoxyribose 5'-phosphate)-DNA + a 5'-end 5'-phospho-2'-deoxyribonucleoside-DNA + H(+)</text>
        <dbReference type="Rhea" id="RHEA:66592"/>
        <dbReference type="Rhea" id="RHEA-COMP:13180"/>
        <dbReference type="Rhea" id="RHEA-COMP:16897"/>
        <dbReference type="Rhea" id="RHEA-COMP:17067"/>
        <dbReference type="ChEBI" id="CHEBI:15378"/>
        <dbReference type="ChEBI" id="CHEBI:136412"/>
        <dbReference type="ChEBI" id="CHEBI:157695"/>
        <dbReference type="ChEBI" id="CHEBI:167181"/>
        <dbReference type="EC" id="4.2.99.18"/>
    </reaction>
</comment>
<comment type="cofactor">
    <cofactor evidence="2">
        <name>Zn(2+)</name>
        <dbReference type="ChEBI" id="CHEBI:29105"/>
    </cofactor>
    <text evidence="2">Binds 1 zinc ion per subunit.</text>
</comment>
<comment type="subunit">
    <text evidence="2">Monomer.</text>
</comment>
<comment type="similarity">
    <text evidence="2">Belongs to the FPG family.</text>
</comment>
<accession>B8CVD1</accession>
<reference key="1">
    <citation type="journal article" date="2008" name="PLoS ONE">
        <title>Environmental adaptation: genomic analysis of the piezotolerant and psychrotolerant deep-sea iron reducing bacterium Shewanella piezotolerans WP3.</title>
        <authorList>
            <person name="Wang F."/>
            <person name="Wang J."/>
            <person name="Jian H."/>
            <person name="Zhang B."/>
            <person name="Li S."/>
            <person name="Wang F."/>
            <person name="Zeng X."/>
            <person name="Gao L."/>
            <person name="Bartlett D.H."/>
            <person name="Yu J."/>
            <person name="Hu S."/>
            <person name="Xiao X."/>
        </authorList>
    </citation>
    <scope>NUCLEOTIDE SEQUENCE [LARGE SCALE GENOMIC DNA]</scope>
    <source>
        <strain>WP3 / JCM 13877</strain>
    </source>
</reference>
<protein>
    <recommendedName>
        <fullName evidence="2">Formamidopyrimidine-DNA glycosylase</fullName>
        <shortName evidence="2">Fapy-DNA glycosylase</shortName>
        <ecNumber evidence="2">3.2.2.23</ecNumber>
    </recommendedName>
    <alternativeName>
        <fullName evidence="2">DNA-(apurinic or apyrimidinic site) lyase MutM</fullName>
        <shortName evidence="2">AP lyase MutM</shortName>
        <ecNumber evidence="2">4.2.99.18</ecNumber>
    </alternativeName>
</protein>